<reference key="1">
    <citation type="submission" date="2006-10" db="EMBL/GenBank/DDBJ databases">
        <authorList>
            <person name="Fleischmann R.D."/>
            <person name="Dodson R.J."/>
            <person name="Haft D.H."/>
            <person name="Merkel J.S."/>
            <person name="Nelson W.C."/>
            <person name="Fraser C.M."/>
        </authorList>
    </citation>
    <scope>NUCLEOTIDE SEQUENCE [LARGE SCALE GENOMIC DNA]</scope>
    <source>
        <strain>ATCC 700084 / mc(2)155</strain>
    </source>
</reference>
<reference key="2">
    <citation type="journal article" date="2007" name="Genome Biol.">
        <title>Interrupted coding sequences in Mycobacterium smegmatis: authentic mutations or sequencing errors?</title>
        <authorList>
            <person name="Deshayes C."/>
            <person name="Perrodou E."/>
            <person name="Gallien S."/>
            <person name="Euphrasie D."/>
            <person name="Schaeffer C."/>
            <person name="Van-Dorsselaer A."/>
            <person name="Poch O."/>
            <person name="Lecompte O."/>
            <person name="Reyrat J.-M."/>
        </authorList>
    </citation>
    <scope>NUCLEOTIDE SEQUENCE [LARGE SCALE GENOMIC DNA]</scope>
    <source>
        <strain>ATCC 700084 / mc(2)155</strain>
    </source>
</reference>
<reference key="3">
    <citation type="journal article" date="2009" name="Genome Res.">
        <title>Ortho-proteogenomics: multiple proteomes investigation through orthology and a new MS-based protocol.</title>
        <authorList>
            <person name="Gallien S."/>
            <person name="Perrodou E."/>
            <person name="Carapito C."/>
            <person name="Deshayes C."/>
            <person name="Reyrat J.-M."/>
            <person name="Van Dorsselaer A."/>
            <person name="Poch O."/>
            <person name="Schaeffer C."/>
            <person name="Lecompte O."/>
        </authorList>
    </citation>
    <scope>NUCLEOTIDE SEQUENCE [LARGE SCALE GENOMIC DNA]</scope>
    <source>
        <strain>ATCC 700084 / mc(2)155</strain>
    </source>
</reference>
<reference key="4">
    <citation type="journal article" date="2015" name="Genome Announc.">
        <title>Complete genome sequences of a Mycobacterium smegmatis laboratory strain (MC2 155) and isoniazid-resistant (4XR1/R2) mutant strains.</title>
        <authorList>
            <person name="Mohan A."/>
            <person name="Padiadpu J."/>
            <person name="Baloni P."/>
            <person name="Chandra N."/>
        </authorList>
    </citation>
    <scope>NUCLEOTIDE SEQUENCE [LARGE SCALE GENOMIC DNA]</scope>
    <source>
        <strain>ATCC 700084 / mc(2)155</strain>
    </source>
</reference>
<reference key="5">
    <citation type="journal article" date="2009" name="Science">
        <title>Benzothiazinones kill Mycobacterium tuberculosis by blocking arabinan synthesis.</title>
        <authorList>
            <person name="Makarov V."/>
            <person name="Manina G."/>
            <person name="Mikusova K."/>
            <person name="Mollmann U."/>
            <person name="Ryabova O."/>
            <person name="Saint-Joanis B."/>
            <person name="Dhar N."/>
            <person name="Pasca M.R."/>
            <person name="Buroni S."/>
            <person name="Lucarelli A.P."/>
            <person name="Milano A."/>
            <person name="De Rossi E."/>
            <person name="Belanova M."/>
            <person name="Bobovska A."/>
            <person name="Dianiskova P."/>
            <person name="Kordulakova J."/>
            <person name="Sala C."/>
            <person name="Fullam E."/>
            <person name="Schneider P."/>
            <person name="McKinney J.D."/>
            <person name="Brodin P."/>
            <person name="Christophe T."/>
            <person name="Waddell S."/>
            <person name="Butcher P."/>
            <person name="Albrethsen J."/>
            <person name="Rosenkrands I."/>
            <person name="Brosch R."/>
            <person name="Nandi V."/>
            <person name="Bharath S."/>
            <person name="Gaonkar S."/>
            <person name="Shandil R.K."/>
            <person name="Balasubramanian V."/>
            <person name="Balganesh T."/>
            <person name="Tyagi S."/>
            <person name="Grosset J."/>
            <person name="Riccardi G."/>
            <person name="Cole S.T."/>
        </authorList>
    </citation>
    <scope>ACTIVITY REGULATION</scope>
    <scope>DRUG TARGET</scope>
    <scope>BTZ043-RESISTANT VARIANTS MN47 AND MN84</scope>
    <source>
        <strain>ATCC 700084 / mc(2)155</strain>
    </source>
</reference>
<reference key="6">
    <citation type="journal article" date="2011" name="PLoS ONE">
        <title>Decaprenylphosphoryl-beta-D-ribose 2'-epimerase, the target of benzothiazinones and dinitrobenzamides, is an essential enzyme in Mycobacterium smegmatis.</title>
        <authorList>
            <person name="Crellin P.K."/>
            <person name="Brammananth R."/>
            <person name="Coppel R.L."/>
        </authorList>
    </citation>
    <scope>DISRUPTION PHENOTYPE</scope>
    <scope>PATHWAY</scope>
    <source>
        <strain>ATCC 700084 / mc(2)155</strain>
    </source>
</reference>
<reference key="7">
    <citation type="journal article" date="2012" name="J. Am. Chem. Soc.">
        <title>Benzothiazinones are suicide inhibitors of mycobacterial decaprenylphosphoryl-beta-D-ribofuranose 2'-oxidase DprE1.</title>
        <authorList>
            <person name="Trefzer C."/>
            <person name="Skovierova H."/>
            <person name="Buroni S."/>
            <person name="Bobovska A."/>
            <person name="Nenci S."/>
            <person name="Molteni E."/>
            <person name="Pojer F."/>
            <person name="Pasca M.R."/>
            <person name="Makarov V."/>
            <person name="Cole S.T."/>
            <person name="Riccardi G."/>
            <person name="Mikusova K."/>
            <person name="Johnsson K."/>
        </authorList>
    </citation>
    <scope>FUNCTION</scope>
    <scope>CATALYTIC ACTIVITY</scope>
    <scope>MUTAGENESIS OF CYS-386</scope>
    <scope>ACTIVITY REGULATION</scope>
    <scope>SUBSTRATE SPECIFICITY</scope>
    <source>
        <strain>ATCC 700084 / mc(2)155</strain>
    </source>
</reference>
<reference key="8">
    <citation type="journal article" date="2012" name="Sci. Transl. Med.">
        <title>Structural basis for benzothiazinone-mediated killing of Mycobacterium tuberculosis.</title>
        <authorList>
            <person name="Neres J."/>
            <person name="Pojer F."/>
            <person name="Molteni E."/>
            <person name="Chiarelli L.R."/>
            <person name="Dhar N."/>
            <person name="Boy-Rottger S."/>
            <person name="Buroni S."/>
            <person name="Fullam E."/>
            <person name="Degiacomi G."/>
            <person name="Lucarelli A.P."/>
            <person name="Read R.J."/>
            <person name="Zanoni G."/>
            <person name="Edmondson D.E."/>
            <person name="De Rossi E."/>
            <person name="Pasca M.R."/>
            <person name="McKinney J.D."/>
            <person name="Dyson P.J."/>
            <person name="Riccardi G."/>
            <person name="Mattevi A."/>
            <person name="Cole S.T."/>
            <person name="Binda C."/>
        </authorList>
    </citation>
    <scope>X-RAY CRYSTALLOGRAPHY (2.10 ANGSTROMS) IN COMPLEXES WITH FAD AND THE BENZOTHIAZINONE BTZ043 INHIBITOR</scope>
    <scope>FUNCTION</scope>
    <scope>BIOPHYSICOCHEMICAL PROPERTIES</scope>
    <scope>MUTAGENESIS OF GLN-335; CYS-386 AND LYS-417</scope>
    <scope>ACTIVITY REGULATION</scope>
    <scope>SUBUNIT</scope>
    <source>
        <strain>ATCC 700084 / mc(2)155</strain>
    </source>
</reference>
<reference key="9">
    <citation type="journal article" date="2013" name="Proteins">
        <title>Crystal structure of decaprenylphosphoryl-beta- D-ribose 2'-epimerase from Mycobacterium smegmatis.</title>
        <authorList>
            <person name="Li H."/>
            <person name="Jogl G."/>
        </authorList>
    </citation>
    <scope>X-RAY CRYSTALLOGRAPHY (2.35 ANGSTROMS) OF 58-460</scope>
    <source>
        <strain>ATCC 607 / DSM 43465 / JCM 20379 / NBRC 3207 / NRRL B-692</strain>
    </source>
</reference>
<dbReference type="EC" id="1.1.98.3" evidence="5"/>
<dbReference type="EMBL" id="CP000480">
    <property type="protein sequence ID" value="ABK72795.1"/>
    <property type="status" value="ALT_INIT"/>
    <property type="molecule type" value="Genomic_DNA"/>
</dbReference>
<dbReference type="EMBL" id="CP001663">
    <property type="protein sequence ID" value="AFP42640.1"/>
    <property type="molecule type" value="Genomic_DNA"/>
</dbReference>
<dbReference type="EMBL" id="CP009494">
    <property type="protein sequence ID" value="AIU11363.1"/>
    <property type="molecule type" value="Genomic_DNA"/>
</dbReference>
<dbReference type="RefSeq" id="WP_003897792.1">
    <property type="nucleotide sequence ID" value="NZ_SIJM01000013.1"/>
</dbReference>
<dbReference type="RefSeq" id="YP_890595.1">
    <property type="nucleotide sequence ID" value="NC_008596.1"/>
</dbReference>
<dbReference type="PDB" id="4AUT">
    <property type="method" value="X-ray"/>
    <property type="resolution" value="2.10 A"/>
    <property type="chains" value="A=1-460"/>
</dbReference>
<dbReference type="PDB" id="4F4Q">
    <property type="method" value="X-ray"/>
    <property type="resolution" value="2.62 A"/>
    <property type="chains" value="A=1-460"/>
</dbReference>
<dbReference type="PDB" id="4G3T">
    <property type="method" value="X-ray"/>
    <property type="resolution" value="2.35 A"/>
    <property type="chains" value="A=58-460"/>
</dbReference>
<dbReference type="PDB" id="4G3U">
    <property type="method" value="X-ray"/>
    <property type="resolution" value="2.69 A"/>
    <property type="chains" value="A/B=58-460"/>
</dbReference>
<dbReference type="PDBsum" id="4AUT"/>
<dbReference type="PDBsum" id="4F4Q"/>
<dbReference type="PDBsum" id="4G3T"/>
<dbReference type="PDBsum" id="4G3U"/>
<dbReference type="SMR" id="A0R607"/>
<dbReference type="STRING" id="246196.MSMEG_6382"/>
<dbReference type="BindingDB" id="A0R607"/>
<dbReference type="ChEMBL" id="CHEMBL3797019"/>
<dbReference type="PaxDb" id="246196-MSMEI_6214"/>
<dbReference type="KEGG" id="msb:LJ00_31545"/>
<dbReference type="KEGG" id="msg:MSMEI_6214"/>
<dbReference type="KEGG" id="msm:MSMEG_6382"/>
<dbReference type="PATRIC" id="fig|246196.19.peg.6209"/>
<dbReference type="eggNOG" id="COG0277">
    <property type="taxonomic scope" value="Bacteria"/>
</dbReference>
<dbReference type="HOGENOM" id="CLU_032465_0_0_11"/>
<dbReference type="OrthoDB" id="143770at2"/>
<dbReference type="BioCyc" id="MetaCyc:MONOMER-17534"/>
<dbReference type="BRENDA" id="1.1.98.3">
    <property type="organism ID" value="3512"/>
</dbReference>
<dbReference type="UniPathway" id="UPA00963"/>
<dbReference type="EvolutionaryTrace" id="A0R607"/>
<dbReference type="Proteomes" id="UP000000757">
    <property type="component" value="Chromosome"/>
</dbReference>
<dbReference type="Proteomes" id="UP000006158">
    <property type="component" value="Chromosome"/>
</dbReference>
<dbReference type="GO" id="GO:0016020">
    <property type="term" value="C:membrane"/>
    <property type="evidence" value="ECO:0007669"/>
    <property type="project" value="InterPro"/>
</dbReference>
<dbReference type="GO" id="GO:0042597">
    <property type="term" value="C:periplasmic space"/>
    <property type="evidence" value="ECO:0007669"/>
    <property type="project" value="UniProtKB-SubCell"/>
</dbReference>
<dbReference type="GO" id="GO:0003885">
    <property type="term" value="F:D-arabinono-1,4-lactone oxidase activity"/>
    <property type="evidence" value="ECO:0007669"/>
    <property type="project" value="InterPro"/>
</dbReference>
<dbReference type="GO" id="GO:0071949">
    <property type="term" value="F:FAD binding"/>
    <property type="evidence" value="ECO:0007669"/>
    <property type="project" value="InterPro"/>
</dbReference>
<dbReference type="GO" id="GO:0080049">
    <property type="term" value="F:L-gulono-1,4-lactone dehydrogenase activity"/>
    <property type="evidence" value="ECO:0007669"/>
    <property type="project" value="TreeGrafter"/>
</dbReference>
<dbReference type="GO" id="GO:0045227">
    <property type="term" value="P:capsule polysaccharide biosynthetic process"/>
    <property type="evidence" value="ECO:0007669"/>
    <property type="project" value="UniProtKB-UniPathway"/>
</dbReference>
<dbReference type="GO" id="GO:0071555">
    <property type="term" value="P:cell wall organization"/>
    <property type="evidence" value="ECO:0007669"/>
    <property type="project" value="UniProtKB-KW"/>
</dbReference>
<dbReference type="GO" id="GO:0046677">
    <property type="term" value="P:response to antibiotic"/>
    <property type="evidence" value="ECO:0007669"/>
    <property type="project" value="UniProtKB-KW"/>
</dbReference>
<dbReference type="Gene3D" id="3.30.465.10">
    <property type="match status" value="1"/>
</dbReference>
<dbReference type="Gene3D" id="3.30.43.10">
    <property type="entry name" value="Uridine Diphospho-n-acetylenolpyruvylglucosamine Reductase, domain 2"/>
    <property type="match status" value="1"/>
</dbReference>
<dbReference type="Gene3D" id="1.10.45.10">
    <property type="entry name" value="Vanillyl-alcohol Oxidase, Chain A, domain 4"/>
    <property type="match status" value="1"/>
</dbReference>
<dbReference type="InterPro" id="IPR007173">
    <property type="entry name" value="ALO_C"/>
</dbReference>
<dbReference type="InterPro" id="IPR016166">
    <property type="entry name" value="FAD-bd_PCMH"/>
</dbReference>
<dbReference type="InterPro" id="IPR036318">
    <property type="entry name" value="FAD-bd_PCMH-like_sf"/>
</dbReference>
<dbReference type="InterPro" id="IPR016167">
    <property type="entry name" value="FAD-bd_PCMH_sub1"/>
</dbReference>
<dbReference type="InterPro" id="IPR016169">
    <property type="entry name" value="FAD-bd_PCMH_sub2"/>
</dbReference>
<dbReference type="InterPro" id="IPR010031">
    <property type="entry name" value="FAD_lactone_oxidase-like"/>
</dbReference>
<dbReference type="InterPro" id="IPR006094">
    <property type="entry name" value="Oxid_FAD_bind_N"/>
</dbReference>
<dbReference type="InterPro" id="IPR016171">
    <property type="entry name" value="Vanillyl_alc_oxidase_C-sub2"/>
</dbReference>
<dbReference type="PANTHER" id="PTHR43762:SF1">
    <property type="entry name" value="D-ARABINONO-1,4-LACTONE OXIDASE"/>
    <property type="match status" value="1"/>
</dbReference>
<dbReference type="PANTHER" id="PTHR43762">
    <property type="entry name" value="L-GULONOLACTONE OXIDASE"/>
    <property type="match status" value="1"/>
</dbReference>
<dbReference type="Pfam" id="PF04030">
    <property type="entry name" value="ALO"/>
    <property type="match status" value="1"/>
</dbReference>
<dbReference type="Pfam" id="PF01565">
    <property type="entry name" value="FAD_binding_4"/>
    <property type="match status" value="1"/>
</dbReference>
<dbReference type="SUPFAM" id="SSF56176">
    <property type="entry name" value="FAD-binding/transporter-associated domain-like"/>
    <property type="match status" value="1"/>
</dbReference>
<dbReference type="PROSITE" id="PS51387">
    <property type="entry name" value="FAD_PCMH"/>
    <property type="match status" value="1"/>
</dbReference>
<evidence type="ECO:0000250" key="1">
    <source>
        <dbReference type="UniProtKB" id="P9WJF1"/>
    </source>
</evidence>
<evidence type="ECO:0000255" key="2">
    <source>
        <dbReference type="PROSITE-ProRule" id="PRU00718"/>
    </source>
</evidence>
<evidence type="ECO:0000269" key="3">
    <source>
    </source>
</evidence>
<evidence type="ECO:0000269" key="4">
    <source>
    </source>
</evidence>
<evidence type="ECO:0000269" key="5">
    <source>
    </source>
</evidence>
<evidence type="ECO:0000269" key="6">
    <source>
    </source>
</evidence>
<evidence type="ECO:0000303" key="7">
    <source>
    </source>
</evidence>
<evidence type="ECO:0000305" key="8"/>
<evidence type="ECO:0000305" key="9">
    <source>
    </source>
</evidence>
<evidence type="ECO:0000305" key="10">
    <source>
    </source>
</evidence>
<evidence type="ECO:0000305" key="11">
    <source>
    </source>
</evidence>
<evidence type="ECO:0007744" key="12">
    <source>
        <dbReference type="PDB" id="4AUT"/>
    </source>
</evidence>
<evidence type="ECO:0007744" key="13">
    <source>
        <dbReference type="PDB" id="4F4Q"/>
    </source>
</evidence>
<evidence type="ECO:0007829" key="14">
    <source>
        <dbReference type="PDB" id="4AUT"/>
    </source>
</evidence>
<evidence type="ECO:0007829" key="15">
    <source>
        <dbReference type="PDB" id="4G3T"/>
    </source>
</evidence>
<name>DPRE1_MYCS2</name>
<keyword id="KW-0002">3D-structure</keyword>
<keyword id="KW-0046">Antibiotic resistance</keyword>
<keyword id="KW-0961">Cell wall biogenesis/degradation</keyword>
<keyword id="KW-0274">FAD</keyword>
<keyword id="KW-0285">Flavoprotein</keyword>
<keyword id="KW-0547">Nucleotide-binding</keyword>
<keyword id="KW-0560">Oxidoreductase</keyword>
<keyword id="KW-0574">Periplasm</keyword>
<keyword id="KW-1185">Reference proteome</keyword>
<sequence length="460" mass="50377">MSTTEFPTTTKRLMGWGRTAPTVASVLSTSDPEVIVRAVTRAAEEGGRGVIARGLGRSYGDNAQNGGGLVIDMPALNRIHSIDSGTRLVDVDAGVSLDQLMKAALPHGLWVPVLPGTRQVTVGGAIGCDIHGKNHHSAGSFGNHVRSMELLTANGEVRHLTPAGPDSDLFWATVGGNGLTGIILRATIEMTPTETAYFIADGDVTGSLDETIAFHSDGSEANYTYSSAWFDAISKPPKLGRAAISRGSLAKLDQLPSKLQKDPLKFDAPQLLTLPDIFPNGLANKFTFMPIGELWYRKSGTYRNKVQNLTQFYHPLDMFGEWNRAYGSAGFLQYQFVVPTEAVEEFKSIIVDIQRSGHYSFLNVFKLFGPGNQAPLSFPIPGWNVCVDFPIKAGLHEFVTELDRRVLEFGGRLYTAKDSRTTAETFHAMYPRIDEWIRIRRSVDPDGVFASDMARRLQLL</sequence>
<gene>
    <name evidence="7" type="primary">dprE1</name>
    <name type="ordered locus">MSMEG_6382</name>
    <name type="ordered locus">MSMEI_6214</name>
    <name type="ORF">LJ00_31545</name>
</gene>
<feature type="chain" id="PRO_0000432471" description="Decaprenylphosphoryl-beta-D-ribose oxidase">
    <location>
        <begin position="1"/>
        <end position="460"/>
    </location>
</feature>
<feature type="domain" description="FAD-binding PCMH-type" evidence="2">
    <location>
        <begin position="19"/>
        <end position="193"/>
    </location>
</feature>
<feature type="binding site" evidence="6 12 13">
    <location>
        <begin position="52"/>
        <end position="62"/>
    </location>
    <ligand>
        <name>FAD</name>
        <dbReference type="ChEBI" id="CHEBI:57692"/>
    </ligand>
</feature>
<feature type="binding site" evidence="6 12 13">
    <location>
        <position position="116"/>
    </location>
    <ligand>
        <name>FAD</name>
        <dbReference type="ChEBI" id="CHEBI:57692"/>
    </ligand>
</feature>
<feature type="binding site" evidence="6 12 13">
    <location>
        <begin position="121"/>
        <end position="124"/>
    </location>
    <ligand>
        <name>FAD</name>
        <dbReference type="ChEBI" id="CHEBI:57692"/>
    </ligand>
</feature>
<feature type="binding site" evidence="6 12 13">
    <location>
        <begin position="128"/>
        <end position="131"/>
    </location>
    <ligand>
        <name>FAD</name>
        <dbReference type="ChEBI" id="CHEBI:57692"/>
    </ligand>
</feature>
<feature type="binding site" evidence="6 12 13">
    <location>
        <position position="183"/>
    </location>
    <ligand>
        <name>FAD</name>
        <dbReference type="ChEBI" id="CHEBI:57692"/>
    </ligand>
</feature>
<feature type="binding site" evidence="6 12 13">
    <location>
        <position position="414"/>
    </location>
    <ligand>
        <name>FAD</name>
        <dbReference type="ChEBI" id="CHEBI:57692"/>
    </ligand>
</feature>
<feature type="sequence variant" description="In strain: MN47; BTZ043-resistant." evidence="3">
    <original>C</original>
    <variation>G</variation>
    <location>
        <position position="386"/>
    </location>
</feature>
<feature type="sequence variant" description="In strain: MN84; BTZ043-resistant." evidence="3">
    <original>C</original>
    <variation>S</variation>
    <location>
        <position position="386"/>
    </location>
</feature>
<feature type="mutagenesis site" description="10-fold decrease in catalytic efficiency." evidence="6">
    <original>Q</original>
    <variation>A</variation>
    <location>
        <position position="335"/>
    </location>
</feature>
<feature type="mutagenesis site" description="14-fold decrease in catalytic efficiency. Reduces BTZs to inert metabolites while avoiding covalent inactivation." evidence="5 6">
    <original>C</original>
    <variation>G</variation>
    <location>
        <position position="386"/>
    </location>
</feature>
<feature type="mutagenesis site" description="Loss of catalytic activity." evidence="6">
    <original>K</original>
    <variation>A</variation>
    <location>
        <position position="417"/>
    </location>
</feature>
<feature type="strand" evidence="14">
    <location>
        <begin position="8"/>
        <end position="13"/>
    </location>
</feature>
<feature type="strand" evidence="14">
    <location>
        <begin position="22"/>
        <end position="27"/>
    </location>
</feature>
<feature type="helix" evidence="14">
    <location>
        <begin position="32"/>
        <end position="40"/>
    </location>
</feature>
<feature type="helix" evidence="14">
    <location>
        <begin position="42"/>
        <end position="45"/>
    </location>
</feature>
<feature type="strand" evidence="14">
    <location>
        <begin position="50"/>
        <end position="55"/>
    </location>
</feature>
<feature type="strand" evidence="14">
    <location>
        <begin position="58"/>
        <end position="61"/>
    </location>
</feature>
<feature type="strand" evidence="14">
    <location>
        <begin position="68"/>
        <end position="72"/>
    </location>
</feature>
<feature type="helix" evidence="14">
    <location>
        <begin position="73"/>
        <end position="75"/>
    </location>
</feature>
<feature type="strand" evidence="14">
    <location>
        <begin position="79"/>
        <end position="83"/>
    </location>
</feature>
<feature type="turn" evidence="14">
    <location>
        <begin position="84"/>
        <end position="87"/>
    </location>
</feature>
<feature type="strand" evidence="14">
    <location>
        <begin position="88"/>
        <end position="92"/>
    </location>
</feature>
<feature type="helix" evidence="14">
    <location>
        <begin position="97"/>
        <end position="104"/>
    </location>
</feature>
<feature type="helix" evidence="14">
    <location>
        <begin position="105"/>
        <end position="107"/>
    </location>
</feature>
<feature type="helix" evidence="14">
    <location>
        <begin position="122"/>
        <end position="127"/>
    </location>
</feature>
<feature type="helix" evidence="14">
    <location>
        <begin position="135"/>
        <end position="138"/>
    </location>
</feature>
<feature type="helix" evidence="14">
    <location>
        <begin position="141"/>
        <end position="144"/>
    </location>
</feature>
<feature type="strand" evidence="14">
    <location>
        <begin position="145"/>
        <end position="151"/>
    </location>
</feature>
<feature type="strand" evidence="14">
    <location>
        <begin position="157"/>
        <end position="160"/>
    </location>
</feature>
<feature type="strand" evidence="14">
    <location>
        <begin position="162"/>
        <end position="164"/>
    </location>
</feature>
<feature type="helix" evidence="14">
    <location>
        <begin position="167"/>
        <end position="173"/>
    </location>
</feature>
<feature type="turn" evidence="14">
    <location>
        <begin position="177"/>
        <end position="180"/>
    </location>
</feature>
<feature type="strand" evidence="14">
    <location>
        <begin position="182"/>
        <end position="189"/>
    </location>
</feature>
<feature type="strand" evidence="14">
    <location>
        <begin position="196"/>
        <end position="204"/>
    </location>
</feature>
<feature type="helix" evidence="14">
    <location>
        <begin position="208"/>
        <end position="216"/>
    </location>
</feature>
<feature type="helix" evidence="14">
    <location>
        <begin position="219"/>
        <end position="222"/>
    </location>
</feature>
<feature type="strand" evidence="14">
    <location>
        <begin position="224"/>
        <end position="230"/>
    </location>
</feature>
<feature type="strand" evidence="15">
    <location>
        <begin position="232"/>
        <end position="234"/>
    </location>
</feature>
<feature type="turn" evidence="14">
    <location>
        <begin position="236"/>
        <end position="240"/>
    </location>
</feature>
<feature type="strand" evidence="14">
    <location>
        <begin position="242"/>
        <end position="249"/>
    </location>
</feature>
<feature type="helix" evidence="14">
    <location>
        <begin position="252"/>
        <end position="254"/>
    </location>
</feature>
<feature type="helix" evidence="14">
    <location>
        <begin position="257"/>
        <end position="261"/>
    </location>
</feature>
<feature type="strand" evidence="14">
    <location>
        <begin position="302"/>
        <end position="308"/>
    </location>
</feature>
<feature type="helix" evidence="14">
    <location>
        <begin position="309"/>
        <end position="313"/>
    </location>
</feature>
<feature type="turn" evidence="14">
    <location>
        <begin position="314"/>
        <end position="317"/>
    </location>
</feature>
<feature type="strand" evidence="14">
    <location>
        <begin position="331"/>
        <end position="339"/>
    </location>
</feature>
<feature type="helix" evidence="14">
    <location>
        <begin position="343"/>
        <end position="356"/>
    </location>
</feature>
<feature type="strand" evidence="14">
    <location>
        <begin position="361"/>
        <end position="368"/>
    </location>
</feature>
<feature type="strand" evidence="14">
    <location>
        <begin position="381"/>
        <end position="390"/>
    </location>
</feature>
<feature type="helix" evidence="14">
    <location>
        <begin position="395"/>
        <end position="408"/>
    </location>
</feature>
<feature type="helix" evidence="14">
    <location>
        <begin position="415"/>
        <end position="417"/>
    </location>
</feature>
<feature type="helix" evidence="14">
    <location>
        <begin position="423"/>
        <end position="429"/>
    </location>
</feature>
<feature type="helix" evidence="14">
    <location>
        <begin position="433"/>
        <end position="443"/>
    </location>
</feature>
<feature type="helix" evidence="14">
    <location>
        <begin position="452"/>
        <end position="456"/>
    </location>
</feature>
<comment type="function">
    <text evidence="1 4 5 6">Component of the DprE1-DprE2 complex that catalyzes the 2-step epimerization of decaprenyl-phospho-ribose (DPR) to decaprenyl-phospho-arabinose (DPA), a key precursor that serves as the arabinose donor required for the synthesis of cell-wall arabinans (PubMed:22188377). DprE1 catalyzes the first step of epimerization, namely FAD-dependent oxidation of the C2' hydroxyl of DPR to yield the keto intermediate decaprenyl-phospho-2'-keto-D-arabinose (DPX) (PubMed:22188377). The intermediate DPX is then transferred to DprE2 subunit of the epimerase complex, most probably through a 'substrate channel' at the interface of DprE1-DprE2 complex (By similarity). Can also use farnesyl-phosphoryl-beta-D-ribofuranose (FPR) as substrate in vitro (PubMed:22188377, PubMed:22956199). Appears to be essential for the growth of M.smegmatis (PubMed:21346818).</text>
</comment>
<comment type="catalytic activity">
    <reaction evidence="5">
        <text>trans,octa-cis-decaprenylphospho-beta-D-ribofuranose + FAD + H(+) = trans,octa-cis-decaprenylphospho-beta-D-erythro-pentofuranosid-2-ulose + FADH2</text>
        <dbReference type="Rhea" id="RHEA:33899"/>
        <dbReference type="ChEBI" id="CHEBI:15378"/>
        <dbReference type="ChEBI" id="CHEBI:57692"/>
        <dbReference type="ChEBI" id="CHEBI:58307"/>
        <dbReference type="ChEBI" id="CHEBI:65067"/>
        <dbReference type="ChEBI" id="CHEBI:66881"/>
        <dbReference type="EC" id="1.1.98.3"/>
    </reaction>
</comment>
<comment type="activity regulation">
    <text evidence="3 5 6">Is inhibited by 8-nitro-benzothiazinones (BTZs) such as BTZ043; BTZs are a new class of antimycobacterial agents that block formation of both cell-wall lipoarabinomannan and arabinogalactan via inhibition of decaprenyl-phospho-arabinose (DPA) synthesis (PubMed:19299584, PubMed:22188377). BTZs are suicide inhibitors that act via covalent modification of DprE1; the essential nitro group of these compounds is reduced by DprE1 to a nitroso group, which then specifically reacts with Cys-386 of DprE1 to form an irreversible semimercaptal adduct (PubMed:22188377, PubMed:22956199). Other compounds with diverse scaffolds (dinitrobenzamides and nitrobenzoquinoxalines) also act as covalent DprE1 inhibitors (PubMed:22956199).</text>
</comment>
<comment type="biophysicochemical properties">
    <kinetics>
        <KM evidence="6">0.11 mM for FPR (at pH 8.5 and 25 degrees Celsius)</KM>
        <text evidence="6">kcat is 12.7 min(-1) for epimerase activity with FPR as substrate (at pH 8.5 and 25 degrees Celsius).</text>
    </kinetics>
</comment>
<comment type="pathway">
    <text evidence="9">Cell wall biogenesis; cell wall polysaccharide biosynthesis.</text>
</comment>
<comment type="subunit">
    <text evidence="1 6">Monomer (PubMed:22956199). Interacts with DprE2 to form an epimerase complex (By similarity).</text>
</comment>
<comment type="subcellular location">
    <subcellularLocation>
        <location evidence="1">Periplasm</location>
    </subcellularLocation>
</comment>
<comment type="disruption phenotype">
    <text evidence="4">Disruption of this gene is only possible in the presence of a plasmid-encoded copy of the gene. Curing of this 'rescue' plasmid from the bacterial population results in a cessation of growth, demonstrating gene essentiality.</text>
</comment>
<comment type="similarity">
    <text evidence="8">Belongs to the DprE1 family.</text>
</comment>
<comment type="sequence caution" evidence="8">
    <conflict type="erroneous initiation">
        <sequence resource="EMBL-CDS" id="ABK72795"/>
    </conflict>
    <text>Extended N-terminus.</text>
</comment>
<organism>
    <name type="scientific">Mycolicibacterium smegmatis (strain ATCC 700084 / mc(2)155)</name>
    <name type="common">Mycobacterium smegmatis</name>
    <dbReference type="NCBI Taxonomy" id="246196"/>
    <lineage>
        <taxon>Bacteria</taxon>
        <taxon>Bacillati</taxon>
        <taxon>Actinomycetota</taxon>
        <taxon>Actinomycetes</taxon>
        <taxon>Mycobacteriales</taxon>
        <taxon>Mycobacteriaceae</taxon>
        <taxon>Mycolicibacterium</taxon>
    </lineage>
</organism>
<accession>A0R607</accession>
<accession>I7FMU1</accession>
<protein>
    <recommendedName>
        <fullName evidence="8">Decaprenylphosphoryl-beta-D-ribose oxidase</fullName>
        <ecNumber evidence="5">1.1.98.3</ecNumber>
    </recommendedName>
    <alternativeName>
        <fullName evidence="11">Decaprenylphospho-beta-D-ribofuranose 2-dehydrogenase</fullName>
    </alternativeName>
    <alternativeName>
        <fullName evidence="10">Decaprenylphosphoryl-beta-D-ribofuranose 2'-epimerase subunit DprE1</fullName>
        <shortName evidence="10">Decaprenyl-phosphoribose 2'-epimerase subunit 1</shortName>
    </alternativeName>
    <alternativeName>
        <fullName evidence="7">Decaprenylphosphoryl-beta-D-ribofuranose 2'-oxidase</fullName>
    </alternativeName>
    <alternativeName>
        <fullName evidence="8">Decaprenylphosphoryl-beta-D-ribose 2-epimerase flavoprotein subunit</fullName>
    </alternativeName>
    <alternativeName>
        <fullName evidence="10">FAD-dependent decaprenylphosphoryl-beta-D-ribofuranose 2-oxidase</fullName>
    </alternativeName>
</protein>
<proteinExistence type="evidence at protein level"/>